<evidence type="ECO:0000250" key="1">
    <source>
        <dbReference type="UniProtKB" id="P9WMW9"/>
    </source>
</evidence>
<evidence type="ECO:0000269" key="2">
    <source>
    </source>
</evidence>
<evidence type="ECO:0000269" key="3">
    <source>
    </source>
</evidence>
<evidence type="ECO:0000303" key="4">
    <source>
    </source>
</evidence>
<evidence type="ECO:0000305" key="5"/>
<evidence type="ECO:0000305" key="6">
    <source>
    </source>
</evidence>
<reference key="1">
    <citation type="submission" date="2006-10" db="EMBL/GenBank/DDBJ databases">
        <authorList>
            <person name="Fleischmann R.D."/>
            <person name="Dodson R.J."/>
            <person name="Haft D.H."/>
            <person name="Merkel J.S."/>
            <person name="Nelson W.C."/>
            <person name="Fraser C.M."/>
        </authorList>
    </citation>
    <scope>NUCLEOTIDE SEQUENCE [LARGE SCALE GENOMIC DNA]</scope>
    <source>
        <strain>ATCC 700084 / mc(2)155</strain>
    </source>
</reference>
<reference key="2">
    <citation type="journal article" date="2007" name="Genome Biol.">
        <title>Interrupted coding sequences in Mycobacterium smegmatis: authentic mutations or sequencing errors?</title>
        <authorList>
            <person name="Deshayes C."/>
            <person name="Perrodou E."/>
            <person name="Gallien S."/>
            <person name="Euphrasie D."/>
            <person name="Schaeffer C."/>
            <person name="Van-Dorsselaer A."/>
            <person name="Poch O."/>
            <person name="Lecompte O."/>
            <person name="Reyrat J.-M."/>
        </authorList>
    </citation>
    <scope>NUCLEOTIDE SEQUENCE [LARGE SCALE GENOMIC DNA]</scope>
    <source>
        <strain>ATCC 700084 / mc(2)155</strain>
    </source>
</reference>
<reference key="3">
    <citation type="journal article" date="2009" name="Genome Res.">
        <title>Ortho-proteogenomics: multiple proteomes investigation through orthology and a new MS-based protocol.</title>
        <authorList>
            <person name="Gallien S."/>
            <person name="Perrodou E."/>
            <person name="Carapito C."/>
            <person name="Deshayes C."/>
            <person name="Reyrat J.-M."/>
            <person name="Van Dorsselaer A."/>
            <person name="Poch O."/>
            <person name="Schaeffer C."/>
            <person name="Lecompte O."/>
        </authorList>
    </citation>
    <scope>NUCLEOTIDE SEQUENCE [LARGE SCALE GENOMIC DNA]</scope>
    <source>
        <strain>ATCC 700084 / mc(2)155</strain>
    </source>
</reference>
<reference key="4">
    <citation type="journal article" date="2008" name="FEMS Microbiol. Lett.">
        <title>Identification of the mycobacterial glucosyl-3-phosphoglycerate synthase.</title>
        <authorList>
            <person name="Empadinhas N."/>
            <person name="Albuquerque L."/>
            <person name="Mendes V."/>
            <person name="Macedo-Ribeiro S."/>
            <person name="da Costa M.S."/>
        </authorList>
    </citation>
    <scope>FUNCTION</scope>
    <scope>CATALYTIC ACTIVITY</scope>
    <scope>SUBSTRATE SPECIFICITY</scope>
    <scope>BIOPHYSICOCHEMICAL PROPERTIES</scope>
    <scope>COFACTOR</scope>
    <scope>SUBUNIT</scope>
</reference>
<reference key="5">
    <citation type="journal article" date="2009" name="PLoS ONE">
        <title>Initiation of methylglucose lipopolysaccharide biosynthesis in mycobacteria.</title>
        <authorList>
            <person name="Kaur D."/>
            <person name="Pham H."/>
            <person name="Larrouy-Maumus G."/>
            <person name="Riviere M."/>
            <person name="Vissa V."/>
            <person name="Guerin M.E."/>
            <person name="Puzo G."/>
            <person name="Brennan P.J."/>
            <person name="Jackson M."/>
        </authorList>
    </citation>
    <scope>FUNCTION</scope>
    <scope>DISRUPTION PHENOTYPE</scope>
    <source>
        <strain>ATCC 700084 / mc(2)155</strain>
    </source>
</reference>
<protein>
    <recommendedName>
        <fullName evidence="4">Glucosyl-3-phosphoglycerate synthase</fullName>
        <shortName evidence="5">GpgS</shortName>
        <ecNumber evidence="2">2.4.1.266</ecNumber>
    </recommendedName>
</protein>
<comment type="function">
    <text evidence="2 3">Involved in the biosynthesis of 6-O-methylglucose lipopolysaccarides (MGLPs) (PubMed:18221489, PubMed:19421329). Catalyzes the transfer of the glucose moiety from a nuleotide sugar such as UDP-alpha-D-glucose to the position 2 of 3-phospho-D-glycerate (3-PGA) to form glucosyl-3-phosphoglycerate (GPG). It can use UDP-glucose, ADP-glucose and GDP-glucose as sugar donor substrates with decreasing affinity and with 3-PGA as an acceptor. D-glycerate can only be an acceptor with ADP-glucose and at a very low rate (PubMed:18221489).</text>
</comment>
<comment type="catalytic activity">
    <reaction evidence="2">
        <text>an NDP-alpha-D-glucose + (2R)-3-phosphoglycerate = (2R)-2-O-(alpha-D-glucopyranosyl)-3-phospho-glycerate + a ribonucleoside 5'-diphosphate + H(+)</text>
        <dbReference type="Rhea" id="RHEA:47244"/>
        <dbReference type="ChEBI" id="CHEBI:15378"/>
        <dbReference type="ChEBI" id="CHEBI:57930"/>
        <dbReference type="ChEBI" id="CHEBI:58272"/>
        <dbReference type="ChEBI" id="CHEBI:62600"/>
        <dbReference type="ChEBI" id="CHEBI:76533"/>
        <dbReference type="EC" id="2.4.1.266"/>
    </reaction>
    <physiologicalReaction direction="left-to-right" evidence="6">
        <dbReference type="Rhea" id="RHEA:47245"/>
    </physiologicalReaction>
</comment>
<comment type="catalytic activity">
    <reaction evidence="2">
        <text>(2R)-3-phosphoglycerate + UDP-alpha-D-glucose = (2R)-2-O-(alpha-D-glucopyranosyl)-3-phospho-glycerate + UDP + H(+)</text>
        <dbReference type="Rhea" id="RHEA:31319"/>
        <dbReference type="ChEBI" id="CHEBI:15378"/>
        <dbReference type="ChEBI" id="CHEBI:58223"/>
        <dbReference type="ChEBI" id="CHEBI:58272"/>
        <dbReference type="ChEBI" id="CHEBI:58885"/>
        <dbReference type="ChEBI" id="CHEBI:62600"/>
        <dbReference type="EC" id="2.4.1.266"/>
    </reaction>
    <physiologicalReaction direction="left-to-right" evidence="6">
        <dbReference type="Rhea" id="RHEA:31320"/>
    </physiologicalReaction>
</comment>
<comment type="catalytic activity">
    <reaction evidence="2">
        <text>ADP-alpha-D-glucose + (2R)-3-phosphoglycerate = (2R)-2-O-(alpha-D-glucopyranosyl)-3-phospho-glycerate + ADP + H(+)</text>
        <dbReference type="Rhea" id="RHEA:31311"/>
        <dbReference type="ChEBI" id="CHEBI:15378"/>
        <dbReference type="ChEBI" id="CHEBI:57498"/>
        <dbReference type="ChEBI" id="CHEBI:58272"/>
        <dbReference type="ChEBI" id="CHEBI:62600"/>
        <dbReference type="ChEBI" id="CHEBI:456216"/>
        <dbReference type="EC" id="2.4.1.266"/>
    </reaction>
    <physiologicalReaction direction="left-to-right" evidence="6">
        <dbReference type="Rhea" id="RHEA:31312"/>
    </physiologicalReaction>
</comment>
<comment type="catalytic activity">
    <reaction evidence="2">
        <text>GDP-D-glucose + (2R)-3-phosphoglycerate = (2R)-2-O-(alpha-D-glucopyranosyl)-3-phospho-glycerate + GDP + H(+)</text>
        <dbReference type="Rhea" id="RHEA:31315"/>
        <dbReference type="ChEBI" id="CHEBI:15378"/>
        <dbReference type="ChEBI" id="CHEBI:58127"/>
        <dbReference type="ChEBI" id="CHEBI:58189"/>
        <dbReference type="ChEBI" id="CHEBI:58272"/>
        <dbReference type="ChEBI" id="CHEBI:62600"/>
        <dbReference type="EC" id="2.4.1.266"/>
    </reaction>
    <physiologicalReaction direction="left-to-right" evidence="6">
        <dbReference type="Rhea" id="RHEA:31316"/>
    </physiologicalReaction>
</comment>
<comment type="cofactor">
    <cofactor evidence="2">
        <name>Mg(2+)</name>
        <dbReference type="ChEBI" id="CHEBI:18420"/>
    </cofactor>
    <cofactor evidence="1">
        <name>Mn(2+)</name>
        <dbReference type="ChEBI" id="CHEBI:29035"/>
    </cofactor>
    <text evidence="2">Requires divalent cations for activity. The maximum activity is observed at 20 mM of MgCl(2).</text>
</comment>
<comment type="biophysicochemical properties">
    <kinetics>
        <KM evidence="2">0.24 mM for 3-PGA (at 37 degrees Celsius)</KM>
        <KM evidence="2">1.28 mM for UDP-glucose (at 37 degrees Celsius)</KM>
        <KM evidence="2">6.08 mM for ADP-glucose (at 37 degrees Celsius)</KM>
        <KM evidence="2">32.04 mM for GDP-glucose (at 37 degrees Celsius)</KM>
        <Vmax evidence="2">2.45 umol/min/mg enzyme towards GDP-glucose</Vmax>
        <Vmax evidence="2">25.91 umol/min/mg enzyme towards 3-PGA</Vmax>
        <Vmax evidence="2">26.23 umol/min/mg enzyme towards ADP-glucose</Vmax>
        <Vmax evidence="2">27.51 umol/min/mg enzyme towards UDP-glucose</Vmax>
    </kinetics>
    <phDependence>
        <text evidence="2">Optimum pH is 8.</text>
    </phDependence>
    <temperatureDependence>
        <text evidence="2">Optimum temperature is 45 degrees Celsius. The activity is undetectable below 20 and above 55 degrees Celsius.</text>
    </temperatureDependence>
</comment>
<comment type="subunit">
    <text evidence="2">Homotrimer.</text>
</comment>
<comment type="disruption phenotype">
    <text evidence="3">Disruption reduces growth rate and results in an 80% decrease in the production of methylglucose lipopolysaccharides (MGLPs) directly attributable to a drastic if not complete loss of GPG synthesis.</text>
</comment>
<comment type="similarity">
    <text evidence="5">Belongs to the glycosyltransferase 2 family.</text>
</comment>
<comment type="sequence caution" evidence="5">
    <conflict type="erroneous initiation">
        <sequence resource="EMBL-CDS" id="AFP41402"/>
    </conflict>
    <text>Extended N-terminus.</text>
</comment>
<name>GPGS_MYCS2</name>
<feature type="chain" id="PRO_0000420165" description="Glucosyl-3-phosphoglycerate synthase">
    <location>
        <begin position="1"/>
        <end position="303"/>
    </location>
</feature>
<feature type="binding site" evidence="1">
    <location>
        <begin position="35"/>
        <end position="39"/>
    </location>
    <ligand>
        <name>UDP-alpha-D-glucose</name>
        <dbReference type="ChEBI" id="CHEBI:58885"/>
    </ligand>
</feature>
<feature type="binding site" evidence="1">
    <location>
        <position position="66"/>
    </location>
    <ligand>
        <name>UDP-alpha-D-glucose</name>
        <dbReference type="ChEBI" id="CHEBI:58885"/>
    </ligand>
</feature>
<feature type="binding site" evidence="1">
    <location>
        <position position="99"/>
    </location>
    <ligand>
        <name>UDP-alpha-D-glucose</name>
        <dbReference type="ChEBI" id="CHEBI:58885"/>
    </ligand>
</feature>
<feature type="binding site" evidence="1">
    <location>
        <begin position="119"/>
        <end position="120"/>
    </location>
    <ligand>
        <name>UDP-alpha-D-glucose</name>
        <dbReference type="ChEBI" id="CHEBI:58885"/>
    </ligand>
</feature>
<feature type="binding site" evidence="1">
    <location>
        <position position="121"/>
    </location>
    <ligand>
        <name>Mn(2+)</name>
        <dbReference type="ChEBI" id="CHEBI:29035"/>
    </ligand>
</feature>
<feature type="binding site" evidence="1">
    <location>
        <begin position="166"/>
        <end position="169"/>
    </location>
    <ligand>
        <name>(2R)-3-phosphoglycerate</name>
        <dbReference type="ChEBI" id="CHEBI:58272"/>
    </ligand>
</feature>
<feature type="binding site" evidence="1">
    <location>
        <begin position="211"/>
        <end position="214"/>
    </location>
    <ligand>
        <name>UDP-alpha-D-glucose</name>
        <dbReference type="ChEBI" id="CHEBI:58885"/>
    </ligand>
</feature>
<feature type="binding site" evidence="1">
    <location>
        <begin position="238"/>
        <end position="243"/>
    </location>
    <ligand>
        <name>UDP-alpha-D-glucose</name>
        <dbReference type="ChEBI" id="CHEBI:58885"/>
    </ligand>
</feature>
<feature type="binding site" evidence="1">
    <location>
        <position position="240"/>
    </location>
    <ligand>
        <name>Mn(2+)</name>
        <dbReference type="ChEBI" id="CHEBI:29035"/>
    </ligand>
</feature>
<feature type="binding site" evidence="1">
    <location>
        <position position="242"/>
    </location>
    <ligand>
        <name>(2R)-3-phosphoglycerate</name>
        <dbReference type="ChEBI" id="CHEBI:58272"/>
    </ligand>
</feature>
<gene>
    <name type="primary">gpgS</name>
    <name type="ordered locus">MSMEG_5084</name>
    <name type="ordered locus">MSMEI_4958</name>
</gene>
<dbReference type="EC" id="2.4.1.266" evidence="2"/>
<dbReference type="EMBL" id="CP000480">
    <property type="protein sequence ID" value="ABK73566.1"/>
    <property type="molecule type" value="Genomic_DNA"/>
</dbReference>
<dbReference type="EMBL" id="CP001663">
    <property type="protein sequence ID" value="AFP41402.1"/>
    <property type="status" value="ALT_INIT"/>
    <property type="molecule type" value="Genomic_DNA"/>
</dbReference>
<dbReference type="RefSeq" id="WP_003896491.1">
    <property type="nucleotide sequence ID" value="NZ_SIJM01000019.1"/>
</dbReference>
<dbReference type="RefSeq" id="YP_889334.1">
    <property type="nucleotide sequence ID" value="NC_008596.1"/>
</dbReference>
<dbReference type="SMR" id="A0R2E6"/>
<dbReference type="STRING" id="246196.MSMEG_5084"/>
<dbReference type="CAZy" id="GT81">
    <property type="family name" value="Glycosyltransferase Family 81"/>
</dbReference>
<dbReference type="PaxDb" id="246196-MSMEI_4958"/>
<dbReference type="KEGG" id="msg:MSMEI_4958"/>
<dbReference type="KEGG" id="msm:MSMEG_5084"/>
<dbReference type="PATRIC" id="fig|246196.19.peg.4962"/>
<dbReference type="eggNOG" id="COG0463">
    <property type="taxonomic scope" value="Bacteria"/>
</dbReference>
<dbReference type="OrthoDB" id="5011697at2"/>
<dbReference type="BRENDA" id="2.4.1.266">
    <property type="organism ID" value="3512"/>
</dbReference>
<dbReference type="Proteomes" id="UP000000757">
    <property type="component" value="Chromosome"/>
</dbReference>
<dbReference type="Proteomes" id="UP000006158">
    <property type="component" value="Chromosome"/>
</dbReference>
<dbReference type="GO" id="GO:0016757">
    <property type="term" value="F:glycosyltransferase activity"/>
    <property type="evidence" value="ECO:0007669"/>
    <property type="project" value="UniProtKB-KW"/>
</dbReference>
<dbReference type="GO" id="GO:0046872">
    <property type="term" value="F:metal ion binding"/>
    <property type="evidence" value="ECO:0007669"/>
    <property type="project" value="UniProtKB-KW"/>
</dbReference>
<dbReference type="Gene3D" id="3.90.550.10">
    <property type="entry name" value="Spore Coat Polysaccharide Biosynthesis Protein SpsA, Chain A"/>
    <property type="match status" value="1"/>
</dbReference>
<dbReference type="InterPro" id="IPR001173">
    <property type="entry name" value="Glyco_trans_2-like"/>
</dbReference>
<dbReference type="InterPro" id="IPR050256">
    <property type="entry name" value="Glycosyltransferase_2"/>
</dbReference>
<dbReference type="InterPro" id="IPR029044">
    <property type="entry name" value="Nucleotide-diphossugar_trans"/>
</dbReference>
<dbReference type="NCBIfam" id="NF010496">
    <property type="entry name" value="PRK13915.1"/>
    <property type="match status" value="1"/>
</dbReference>
<dbReference type="PANTHER" id="PTHR48090:SF10">
    <property type="entry name" value="GLUCOSYL-3-PHOSPHOGLYCERATE SYNTHASE"/>
    <property type="match status" value="1"/>
</dbReference>
<dbReference type="PANTHER" id="PTHR48090">
    <property type="entry name" value="UNDECAPRENYL-PHOSPHATE 4-DEOXY-4-FORMAMIDO-L-ARABINOSE TRANSFERASE-RELATED"/>
    <property type="match status" value="1"/>
</dbReference>
<dbReference type="Pfam" id="PF00535">
    <property type="entry name" value="Glycos_transf_2"/>
    <property type="match status" value="1"/>
</dbReference>
<dbReference type="SUPFAM" id="SSF53448">
    <property type="entry name" value="Nucleotide-diphospho-sugar transferases"/>
    <property type="match status" value="1"/>
</dbReference>
<sequence length="303" mass="32304">MGHRWLTDHSWNRPSWTVADLEAAKAGRTVSVVLPALNEEETVGSVVETIKPLLGGLVDELIVLDSGSTDETEIRAVAAGAKVVSREAALPEVPPQPGKGEVLWRSLAATTGDIIAFVDSDLIDPDPMFVPKLLGPLLTCDGVHLVKGFYRRPLKVSGAEDANGGGRVTELVARPLLASLRPELNCVLQPLGGEYAGTRELLTSVPFAPGYGVEIGLLVDTYDRLGLDGIAQVNLGVRAHRNRPLTELASMSRQVIATLLSRCGISDSGVGLTQFFADGDDFTPRVSSVSLADRPPMTTLRPR</sequence>
<keyword id="KW-0328">Glycosyltransferase</keyword>
<keyword id="KW-0460">Magnesium</keyword>
<keyword id="KW-0464">Manganese</keyword>
<keyword id="KW-0479">Metal-binding</keyword>
<keyword id="KW-1185">Reference proteome</keyword>
<keyword id="KW-0808">Transferase</keyword>
<accession>A0R2E6</accession>
<accession>I7G6T6</accession>
<proteinExistence type="evidence at protein level"/>
<organism>
    <name type="scientific">Mycolicibacterium smegmatis (strain ATCC 700084 / mc(2)155)</name>
    <name type="common">Mycobacterium smegmatis</name>
    <dbReference type="NCBI Taxonomy" id="246196"/>
    <lineage>
        <taxon>Bacteria</taxon>
        <taxon>Bacillati</taxon>
        <taxon>Actinomycetota</taxon>
        <taxon>Actinomycetes</taxon>
        <taxon>Mycobacteriales</taxon>
        <taxon>Mycobacteriaceae</taxon>
        <taxon>Mycolicibacterium</taxon>
    </lineage>
</organism>